<feature type="chain" id="PRO_0000146868" description="Adenosylcobinamide-GDP ribazoletransferase">
    <location>
        <begin position="1"/>
        <end position="260"/>
    </location>
</feature>
<feature type="transmembrane region" description="Helical" evidence="1">
    <location>
        <begin position="42"/>
        <end position="62"/>
    </location>
</feature>
<feature type="transmembrane region" description="Helical" evidence="1">
    <location>
        <begin position="64"/>
        <end position="84"/>
    </location>
</feature>
<feature type="transmembrane region" description="Helical" evidence="1">
    <location>
        <begin position="117"/>
        <end position="137"/>
    </location>
</feature>
<feature type="transmembrane region" description="Helical" evidence="1">
    <location>
        <begin position="144"/>
        <end position="164"/>
    </location>
</feature>
<feature type="transmembrane region" description="Helical" evidence="1">
    <location>
        <begin position="192"/>
        <end position="212"/>
    </location>
</feature>
<feature type="transmembrane region" description="Helical" evidence="1">
    <location>
        <begin position="214"/>
        <end position="234"/>
    </location>
</feature>
<feature type="transmembrane region" description="Helical" evidence="1">
    <location>
        <begin position="240"/>
        <end position="260"/>
    </location>
</feature>
<gene>
    <name evidence="1" type="primary">cobS</name>
    <name type="ordered locus">BR0866</name>
    <name type="ordered locus">BS1330_I0862</name>
</gene>
<organism>
    <name type="scientific">Brucella suis biovar 1 (strain 1330)</name>
    <dbReference type="NCBI Taxonomy" id="204722"/>
    <lineage>
        <taxon>Bacteria</taxon>
        <taxon>Pseudomonadati</taxon>
        <taxon>Pseudomonadota</taxon>
        <taxon>Alphaproteobacteria</taxon>
        <taxon>Hyphomicrobiales</taxon>
        <taxon>Brucellaceae</taxon>
        <taxon>Brucella/Ochrobactrum group</taxon>
        <taxon>Brucella</taxon>
    </lineage>
</organism>
<proteinExistence type="inferred from homology"/>
<reference key="1">
    <citation type="journal article" date="2002" name="Proc. Natl. Acad. Sci. U.S.A.">
        <title>The Brucella suis genome reveals fundamental similarities between animal and plant pathogens and symbionts.</title>
        <authorList>
            <person name="Paulsen I.T."/>
            <person name="Seshadri R."/>
            <person name="Nelson K.E."/>
            <person name="Eisen J.A."/>
            <person name="Heidelberg J.F."/>
            <person name="Read T.D."/>
            <person name="Dodson R.J."/>
            <person name="Umayam L.A."/>
            <person name="Brinkac L.M."/>
            <person name="Beanan M.J."/>
            <person name="Daugherty S.C."/>
            <person name="DeBoy R.T."/>
            <person name="Durkin A.S."/>
            <person name="Kolonay J.F."/>
            <person name="Madupu R."/>
            <person name="Nelson W.C."/>
            <person name="Ayodeji B."/>
            <person name="Kraul M."/>
            <person name="Shetty J."/>
            <person name="Malek J.A."/>
            <person name="Van Aken S.E."/>
            <person name="Riedmuller S."/>
            <person name="Tettelin H."/>
            <person name="Gill S.R."/>
            <person name="White O."/>
            <person name="Salzberg S.L."/>
            <person name="Hoover D.L."/>
            <person name="Lindler L.E."/>
            <person name="Halling S.M."/>
            <person name="Boyle S.M."/>
            <person name="Fraser C.M."/>
        </authorList>
    </citation>
    <scope>NUCLEOTIDE SEQUENCE [LARGE SCALE GENOMIC DNA]</scope>
    <source>
        <strain>1330</strain>
    </source>
</reference>
<reference key="2">
    <citation type="journal article" date="2011" name="J. Bacteriol.">
        <title>Revised genome sequence of Brucella suis 1330.</title>
        <authorList>
            <person name="Tae H."/>
            <person name="Shallom S."/>
            <person name="Settlage R."/>
            <person name="Preston D."/>
            <person name="Adams L.G."/>
            <person name="Garner H.R."/>
        </authorList>
    </citation>
    <scope>NUCLEOTIDE SEQUENCE [LARGE SCALE GENOMIC DNA]</scope>
    <source>
        <strain>1330</strain>
    </source>
</reference>
<sequence length="260" mass="26404">MQRNGLIGDTIRSLGFLSRLPLPQGWFDNTDDSLPRNARAFPLAGGILGLLAGVALLIANAISLPPLAAALIAIGALAAMTGALHEDGLGDTADGFFGASTPDRRLDIMKDSRIGTFAALTLVIWTGVKASLLMAIIARAGAGYALLALIGTEAASRAGMLAFWHALPSARPGGLADSMGQPQWETVVCGCGLGLALLAIGFLPSGGMVALINALVLMTVVLFGFARLCMAKIGGQTGDTLGAAQQIGSLAALIGLVMAL</sequence>
<keyword id="KW-0997">Cell inner membrane</keyword>
<keyword id="KW-1003">Cell membrane</keyword>
<keyword id="KW-0169">Cobalamin biosynthesis</keyword>
<keyword id="KW-0460">Magnesium</keyword>
<keyword id="KW-0472">Membrane</keyword>
<keyword id="KW-0808">Transferase</keyword>
<keyword id="KW-0812">Transmembrane</keyword>
<keyword id="KW-1133">Transmembrane helix</keyword>
<protein>
    <recommendedName>
        <fullName evidence="1">Adenosylcobinamide-GDP ribazoletransferase</fullName>
        <ecNumber evidence="1">2.7.8.26</ecNumber>
    </recommendedName>
    <alternativeName>
        <fullName evidence="1">Cobalamin synthase</fullName>
    </alternativeName>
    <alternativeName>
        <fullName evidence="1">Cobalamin-5'-phosphate synthase</fullName>
    </alternativeName>
</protein>
<dbReference type="EC" id="2.7.8.26" evidence="1"/>
<dbReference type="EMBL" id="AE014291">
    <property type="protein sequence ID" value="AAN29794.1"/>
    <property type="molecule type" value="Genomic_DNA"/>
</dbReference>
<dbReference type="EMBL" id="CP002997">
    <property type="protein sequence ID" value="AEM18211.1"/>
    <property type="molecule type" value="Genomic_DNA"/>
</dbReference>
<dbReference type="RefSeq" id="WP_002963996.1">
    <property type="nucleotide sequence ID" value="NZ_KN046804.1"/>
</dbReference>
<dbReference type="KEGG" id="bms:BR0866"/>
<dbReference type="KEGG" id="bsi:BS1330_I0862"/>
<dbReference type="PATRIC" id="fig|204722.21.peg.2579"/>
<dbReference type="HOGENOM" id="CLU_057426_1_0_5"/>
<dbReference type="PhylomeDB" id="Q8G156"/>
<dbReference type="UniPathway" id="UPA00148">
    <property type="reaction ID" value="UER00238"/>
</dbReference>
<dbReference type="Proteomes" id="UP000007104">
    <property type="component" value="Chromosome I"/>
</dbReference>
<dbReference type="GO" id="GO:0005886">
    <property type="term" value="C:plasma membrane"/>
    <property type="evidence" value="ECO:0007669"/>
    <property type="project" value="UniProtKB-SubCell"/>
</dbReference>
<dbReference type="GO" id="GO:0051073">
    <property type="term" value="F:adenosylcobinamide-GDP ribazoletransferase activity"/>
    <property type="evidence" value="ECO:0007669"/>
    <property type="project" value="UniProtKB-UniRule"/>
</dbReference>
<dbReference type="GO" id="GO:0008818">
    <property type="term" value="F:cobalamin 5'-phosphate synthase activity"/>
    <property type="evidence" value="ECO:0007669"/>
    <property type="project" value="UniProtKB-UniRule"/>
</dbReference>
<dbReference type="GO" id="GO:0009236">
    <property type="term" value="P:cobalamin biosynthetic process"/>
    <property type="evidence" value="ECO:0007669"/>
    <property type="project" value="UniProtKB-UniRule"/>
</dbReference>
<dbReference type="HAMAP" id="MF_00719">
    <property type="entry name" value="CobS"/>
    <property type="match status" value="1"/>
</dbReference>
<dbReference type="InterPro" id="IPR003805">
    <property type="entry name" value="CobS"/>
</dbReference>
<dbReference type="NCBIfam" id="TIGR00317">
    <property type="entry name" value="cobS"/>
    <property type="match status" value="1"/>
</dbReference>
<dbReference type="NCBIfam" id="NF001276">
    <property type="entry name" value="PRK00235.1-2"/>
    <property type="match status" value="1"/>
</dbReference>
<dbReference type="PANTHER" id="PTHR34148">
    <property type="entry name" value="ADENOSYLCOBINAMIDE-GDP RIBAZOLETRANSFERASE"/>
    <property type="match status" value="1"/>
</dbReference>
<dbReference type="PANTHER" id="PTHR34148:SF1">
    <property type="entry name" value="ADENOSYLCOBINAMIDE-GDP RIBAZOLETRANSFERASE"/>
    <property type="match status" value="1"/>
</dbReference>
<dbReference type="Pfam" id="PF02654">
    <property type="entry name" value="CobS"/>
    <property type="match status" value="1"/>
</dbReference>
<comment type="function">
    <text evidence="1">Joins adenosylcobinamide-GDP and alpha-ribazole to generate adenosylcobalamin (Ado-cobalamin). Also synthesizes adenosylcobalamin 5'-phosphate from adenosylcobinamide-GDP and alpha-ribazole 5'-phosphate.</text>
</comment>
<comment type="catalytic activity">
    <reaction evidence="1">
        <text>alpha-ribazole + adenosylcob(III)inamide-GDP = adenosylcob(III)alamin + GMP + H(+)</text>
        <dbReference type="Rhea" id="RHEA:16049"/>
        <dbReference type="ChEBI" id="CHEBI:10329"/>
        <dbReference type="ChEBI" id="CHEBI:15378"/>
        <dbReference type="ChEBI" id="CHEBI:18408"/>
        <dbReference type="ChEBI" id="CHEBI:58115"/>
        <dbReference type="ChEBI" id="CHEBI:60487"/>
        <dbReference type="EC" id="2.7.8.26"/>
    </reaction>
</comment>
<comment type="catalytic activity">
    <reaction evidence="1">
        <text>alpha-ribazole 5'-phosphate + adenosylcob(III)inamide-GDP = adenosylcob(III)alamin 5'-phosphate + GMP + H(+)</text>
        <dbReference type="Rhea" id="RHEA:23560"/>
        <dbReference type="ChEBI" id="CHEBI:15378"/>
        <dbReference type="ChEBI" id="CHEBI:57918"/>
        <dbReference type="ChEBI" id="CHEBI:58115"/>
        <dbReference type="ChEBI" id="CHEBI:60487"/>
        <dbReference type="ChEBI" id="CHEBI:60493"/>
        <dbReference type="EC" id="2.7.8.26"/>
    </reaction>
</comment>
<comment type="cofactor">
    <cofactor evidence="1">
        <name>Mg(2+)</name>
        <dbReference type="ChEBI" id="CHEBI:18420"/>
    </cofactor>
</comment>
<comment type="pathway">
    <text evidence="1">Cofactor biosynthesis; adenosylcobalamin biosynthesis; adenosylcobalamin from cob(II)yrinate a,c-diamide: step 7/7.</text>
</comment>
<comment type="subcellular location">
    <subcellularLocation>
        <location evidence="1">Cell inner membrane</location>
        <topology evidence="1">Multi-pass membrane protein</topology>
    </subcellularLocation>
</comment>
<comment type="similarity">
    <text evidence="1">Belongs to the CobS family.</text>
</comment>
<name>COBS_BRUSU</name>
<accession>Q8G156</accession>
<accession>G0K994</accession>
<evidence type="ECO:0000255" key="1">
    <source>
        <dbReference type="HAMAP-Rule" id="MF_00719"/>
    </source>
</evidence>